<proteinExistence type="evidence at protein level"/>
<sequence>KPKEDREWEKFKTKHITSQSVADFNCNRTMNDPAYTPDGQCKPVNTFIHSTTGPVKEICRRATGRVNKSSTQQFTLTTCKNPIRCKYSQSNTTNFICITCRDNYPVHFVKTGKC</sequence>
<feature type="chain" id="PRO_0000291307" description="Amphinase-1">
    <location>
        <begin position="1"/>
        <end position="114"/>
    </location>
</feature>
<feature type="active site" description="Proton acceptor" evidence="1">
    <location>
        <position position="15"/>
    </location>
</feature>
<feature type="active site" description="Proton donor" evidence="1">
    <location>
        <position position="107"/>
    </location>
</feature>
<feature type="binding site" evidence="1">
    <location>
        <begin position="42"/>
        <end position="46"/>
    </location>
    <ligand>
        <name>substrate</name>
    </ligand>
</feature>
<feature type="glycosylation site" description="N-linked (GlcNAc...) asparagine" evidence="2">
    <location>
        <position position="27"/>
    </location>
</feature>
<feature type="glycosylation site" description="N-linked (GlcNAc...) asparagine" evidence="2">
    <location>
        <position position="67"/>
    </location>
</feature>
<feature type="glycosylation site" description="N-linked (GlcNAc...) asparagine" evidence="2">
    <location>
        <position position="91"/>
    </location>
</feature>
<feature type="disulfide bond" evidence="1">
    <location>
        <begin position="26"/>
        <end position="79"/>
    </location>
</feature>
<feature type="disulfide bond" evidence="1">
    <location>
        <begin position="41"/>
        <end position="85"/>
    </location>
</feature>
<feature type="disulfide bond" evidence="1">
    <location>
        <begin position="59"/>
        <end position="100"/>
    </location>
</feature>
<feature type="disulfide bond" evidence="1">
    <location>
        <begin position="97"/>
        <end position="114"/>
    </location>
</feature>
<accession>P85072</accession>
<keyword id="KW-0903">Direct protein sequencing</keyword>
<keyword id="KW-1015">Disulfide bond</keyword>
<keyword id="KW-0255">Endonuclease</keyword>
<keyword id="KW-0325">Glycoprotein</keyword>
<keyword id="KW-0378">Hydrolase</keyword>
<keyword id="KW-0540">Nuclease</keyword>
<keyword id="KW-0964">Secreted</keyword>
<comment type="function">
    <text evidence="3">Endonuclease, hydrolyzes highly polymerized RNA, poly(U) and poly(C), and the dinucleotides CpA and UpA. More active towards rCA than rUA or rUG. Has cytotoxic activity against cultured human submaxillary gland carcinoma cells.</text>
</comment>
<comment type="subunit">
    <text evidence="3">Monomer.</text>
</comment>
<comment type="subcellular location">
    <subcellularLocation>
        <location evidence="4">Secreted</location>
    </subcellularLocation>
</comment>
<comment type="PTM">
    <text evidence="3">There are at least five different forms arising from glycan heterogeneity.</text>
</comment>
<comment type="mass spectrometry">
    <text>Major (most represented) glycoform 1.</text>
</comment>
<comment type="mass spectrometry">
    <text>Major (second-most represented) glycoform 2.</text>
</comment>
<comment type="mass spectrometry">
    <text>Minor glycoform 3.</text>
</comment>
<comment type="mass spectrometry">
    <text>Minor glycoform 4.</text>
</comment>
<comment type="mass spectrometry">
    <text>Minor (least represented) glycoform 5.</text>
</comment>
<comment type="similarity">
    <text evidence="2">Belongs to the pancreatic ribonuclease family.</text>
</comment>
<name>AMPS1_LITPI</name>
<protein>
    <recommendedName>
        <fullName>Amphinase-1</fullName>
        <ecNumber>3.1.27.-</ecNumber>
    </recommendedName>
</protein>
<reference key="1">
    <citation type="journal article" date="2007" name="J. Mol. Biol.">
        <title>Enzymatic and structural characterisation of amphinase, a novel cytotoxic ribonuclease from Rana pipiens oocytes.</title>
        <authorList>
            <person name="Singh U.P."/>
            <person name="Ardelt W."/>
            <person name="Saxena S.K."/>
            <person name="Holloway D.E."/>
            <person name="Vidunas E."/>
            <person name="Lee H.-S."/>
            <person name="Saxena A."/>
            <person name="Shogen K."/>
            <person name="Acharya K.R."/>
        </authorList>
    </citation>
    <scope>PROTEIN SEQUENCE</scope>
    <scope>FUNCTION</scope>
    <scope>SUBUNIT</scope>
    <scope>MASS SPECTROMETRY</scope>
    <source>
        <tissue>Oocyte</tissue>
    </source>
</reference>
<dbReference type="EC" id="3.1.27.-"/>
<dbReference type="SMR" id="P85072"/>
<dbReference type="GO" id="GO:0005576">
    <property type="term" value="C:extracellular region"/>
    <property type="evidence" value="ECO:0007669"/>
    <property type="project" value="UniProtKB-SubCell"/>
</dbReference>
<dbReference type="GO" id="GO:0004519">
    <property type="term" value="F:endonuclease activity"/>
    <property type="evidence" value="ECO:0007669"/>
    <property type="project" value="UniProtKB-KW"/>
</dbReference>
<dbReference type="GO" id="GO:0003676">
    <property type="term" value="F:nucleic acid binding"/>
    <property type="evidence" value="ECO:0007669"/>
    <property type="project" value="InterPro"/>
</dbReference>
<dbReference type="GO" id="GO:0004540">
    <property type="term" value="F:RNA nuclease activity"/>
    <property type="evidence" value="ECO:0007669"/>
    <property type="project" value="TreeGrafter"/>
</dbReference>
<dbReference type="GO" id="GO:0050830">
    <property type="term" value="P:defense response to Gram-positive bacterium"/>
    <property type="evidence" value="ECO:0007669"/>
    <property type="project" value="TreeGrafter"/>
</dbReference>
<dbReference type="CDD" id="cd06265">
    <property type="entry name" value="RNase_A_canonical"/>
    <property type="match status" value="1"/>
</dbReference>
<dbReference type="Gene3D" id="3.10.130.10">
    <property type="entry name" value="Ribonuclease A-like domain"/>
    <property type="match status" value="1"/>
</dbReference>
<dbReference type="InterPro" id="IPR001427">
    <property type="entry name" value="RNaseA"/>
</dbReference>
<dbReference type="InterPro" id="IPR036816">
    <property type="entry name" value="RNaseA-like_dom_sf"/>
</dbReference>
<dbReference type="InterPro" id="IPR023411">
    <property type="entry name" value="RNaseA_AS"/>
</dbReference>
<dbReference type="InterPro" id="IPR023412">
    <property type="entry name" value="RNaseA_domain"/>
</dbReference>
<dbReference type="PANTHER" id="PTHR11437">
    <property type="entry name" value="RIBONUCLEASE"/>
    <property type="match status" value="1"/>
</dbReference>
<dbReference type="Pfam" id="PF00074">
    <property type="entry name" value="RnaseA"/>
    <property type="match status" value="1"/>
</dbReference>
<dbReference type="SMART" id="SM00092">
    <property type="entry name" value="RNAse_Pc"/>
    <property type="match status" value="1"/>
</dbReference>
<dbReference type="SUPFAM" id="SSF54076">
    <property type="entry name" value="RNase A-like"/>
    <property type="match status" value="1"/>
</dbReference>
<dbReference type="PROSITE" id="PS00127">
    <property type="entry name" value="RNASE_PANCREATIC"/>
    <property type="match status" value="1"/>
</dbReference>
<organism>
    <name type="scientific">Lithobates pipiens</name>
    <name type="common">Northern leopard frog</name>
    <name type="synonym">Rana pipiens</name>
    <dbReference type="NCBI Taxonomy" id="8404"/>
    <lineage>
        <taxon>Eukaryota</taxon>
        <taxon>Metazoa</taxon>
        <taxon>Chordata</taxon>
        <taxon>Craniata</taxon>
        <taxon>Vertebrata</taxon>
        <taxon>Euteleostomi</taxon>
        <taxon>Amphibia</taxon>
        <taxon>Batrachia</taxon>
        <taxon>Anura</taxon>
        <taxon>Neobatrachia</taxon>
        <taxon>Ranoidea</taxon>
        <taxon>Ranidae</taxon>
        <taxon>Lithobates</taxon>
    </lineage>
</organism>
<evidence type="ECO:0000250" key="1">
    <source>
        <dbReference type="UniProtKB" id="P11916"/>
    </source>
</evidence>
<evidence type="ECO:0000255" key="2"/>
<evidence type="ECO:0000269" key="3">
    <source>
    </source>
</evidence>
<evidence type="ECO:0000305" key="4"/>